<feature type="chain" id="PRO_0000244344" description="Uncharacterized protein C15orf39 homolog">
    <location>
        <begin position="1"/>
        <end position="1023"/>
    </location>
</feature>
<feature type="region of interest" description="Disordered" evidence="2">
    <location>
        <begin position="1"/>
        <end position="35"/>
    </location>
</feature>
<feature type="region of interest" description="Disordered" evidence="2">
    <location>
        <begin position="381"/>
        <end position="501"/>
    </location>
</feature>
<feature type="region of interest" description="Disordered" evidence="2">
    <location>
        <begin position="518"/>
        <end position="551"/>
    </location>
</feature>
<feature type="region of interest" description="Disordered" evidence="2">
    <location>
        <begin position="703"/>
        <end position="742"/>
    </location>
</feature>
<feature type="region of interest" description="Disordered" evidence="2">
    <location>
        <begin position="907"/>
        <end position="980"/>
    </location>
</feature>
<feature type="region of interest" description="Disordered" evidence="2">
    <location>
        <begin position="1002"/>
        <end position="1023"/>
    </location>
</feature>
<feature type="compositionally biased region" description="Polar residues" evidence="2">
    <location>
        <begin position="391"/>
        <end position="400"/>
    </location>
</feature>
<feature type="compositionally biased region" description="Basic and acidic residues" evidence="2">
    <location>
        <begin position="425"/>
        <end position="436"/>
    </location>
</feature>
<feature type="compositionally biased region" description="Basic and acidic residues" evidence="2">
    <location>
        <begin position="443"/>
        <end position="454"/>
    </location>
</feature>
<feature type="compositionally biased region" description="Basic and acidic residues" evidence="2">
    <location>
        <begin position="477"/>
        <end position="490"/>
    </location>
</feature>
<feature type="compositionally biased region" description="Pro residues" evidence="2">
    <location>
        <begin position="706"/>
        <end position="722"/>
    </location>
</feature>
<feature type="compositionally biased region" description="Low complexity" evidence="2">
    <location>
        <begin position="963"/>
        <end position="972"/>
    </location>
</feature>
<feature type="modified residue" description="N6-acetyllysine" evidence="1">
    <location>
        <position position="17"/>
    </location>
</feature>
<feature type="modified residue" description="Phosphoserine" evidence="1">
    <location>
        <position position="206"/>
    </location>
</feature>
<feature type="modified residue" description="Phosphoserine" evidence="1">
    <location>
        <position position="383"/>
    </location>
</feature>
<feature type="modified residue" description="Phosphothreonine" evidence="1">
    <location>
        <position position="389"/>
    </location>
</feature>
<feature type="modified residue" description="Phosphoserine" evidence="6">
    <location>
        <position position="493"/>
    </location>
</feature>
<feature type="modified residue" description="Phosphoserine" evidence="6">
    <location>
        <position position="494"/>
    </location>
</feature>
<feature type="modified residue" description="Phosphoserine" evidence="5">
    <location>
        <position position="912"/>
    </location>
</feature>
<feature type="modified residue" description="Phosphoserine" evidence="6">
    <location>
        <position position="964"/>
    </location>
</feature>
<feature type="modified residue" description="Phosphoserine" evidence="6">
    <location>
        <position position="972"/>
    </location>
</feature>
<feature type="splice variant" id="VSP_019542" description="In isoform 2." evidence="3">
    <location>
        <begin position="46"/>
        <end position="902"/>
    </location>
</feature>
<feature type="sequence conflict" description="In Ref. 1; BAE26223/BAE33289/BAE41264." evidence="4" ref="1">
    <original>S</original>
    <variation>G</variation>
    <location>
        <position position="230"/>
    </location>
</feature>
<feature type="sequence conflict" description="In Ref. 1; BAE26223." evidence="4" ref="1">
    <original>G</original>
    <variation>S</variation>
    <location>
        <position position="313"/>
    </location>
</feature>
<feature type="sequence conflict" description="In Ref. 1; BAE26223." evidence="4" ref="1">
    <original>L</original>
    <variation>F</variation>
    <location>
        <position position="342"/>
    </location>
</feature>
<feature type="sequence conflict" description="In Ref. 1; BAE41264." evidence="4" ref="1">
    <original>G</original>
    <variation>E</variation>
    <location>
        <position position="387"/>
    </location>
</feature>
<feature type="sequence conflict" description="In Ref. 1; BAE26223/BAE33289/BAE41264." evidence="4" ref="1">
    <original>T</original>
    <variation>P</variation>
    <location>
        <position position="653"/>
    </location>
</feature>
<feature type="sequence conflict" description="In Ref. 1; BAE26223/BAE33289/BAE41264." evidence="4" ref="1">
    <original>V</original>
    <variation>A</variation>
    <location>
        <position position="736"/>
    </location>
</feature>
<feature type="sequence conflict" description="In Ref. 1; BAE26223/BAE33289/BAE41264." evidence="4" ref="1">
    <original>S</original>
    <variation>P</variation>
    <location>
        <position position="1009"/>
    </location>
</feature>
<accession>Q3TEI4</accession>
<accession>Q148A1</accession>
<accession>Q3TMF2</accession>
<accession>Q3U253</accession>
<accession>Q3UM75</accession>
<accession>Q9DA93</accession>
<protein>
    <recommendedName>
        <fullName>Uncharacterized protein C15orf39 homolog</fullName>
    </recommendedName>
</protein>
<evidence type="ECO:0000250" key="1">
    <source>
        <dbReference type="UniProtKB" id="Q6ZRI6"/>
    </source>
</evidence>
<evidence type="ECO:0000256" key="2">
    <source>
        <dbReference type="SAM" id="MobiDB-lite"/>
    </source>
</evidence>
<evidence type="ECO:0000303" key="3">
    <source>
    </source>
</evidence>
<evidence type="ECO:0000305" key="4"/>
<evidence type="ECO:0007744" key="5">
    <source>
    </source>
</evidence>
<evidence type="ECO:0007744" key="6">
    <source>
    </source>
</evidence>
<organism>
    <name type="scientific">Mus musculus</name>
    <name type="common">Mouse</name>
    <dbReference type="NCBI Taxonomy" id="10090"/>
    <lineage>
        <taxon>Eukaryota</taxon>
        <taxon>Metazoa</taxon>
        <taxon>Chordata</taxon>
        <taxon>Craniata</taxon>
        <taxon>Vertebrata</taxon>
        <taxon>Euteleostomi</taxon>
        <taxon>Mammalia</taxon>
        <taxon>Eutheria</taxon>
        <taxon>Euarchontoglires</taxon>
        <taxon>Glires</taxon>
        <taxon>Rodentia</taxon>
        <taxon>Myomorpha</taxon>
        <taxon>Muroidea</taxon>
        <taxon>Muridae</taxon>
        <taxon>Murinae</taxon>
        <taxon>Mus</taxon>
        <taxon>Mus</taxon>
    </lineage>
</organism>
<name>CO039_MOUSE</name>
<keyword id="KW-0007">Acetylation</keyword>
<keyword id="KW-0025">Alternative splicing</keyword>
<keyword id="KW-0597">Phosphoprotein</keyword>
<keyword id="KW-1185">Reference proteome</keyword>
<dbReference type="EMBL" id="AK006055">
    <property type="protein sequence ID" value="BAB24386.1"/>
    <property type="molecule type" value="mRNA"/>
</dbReference>
<dbReference type="EMBL" id="AK145074">
    <property type="protein sequence ID" value="BAE26223.1"/>
    <property type="molecule type" value="mRNA"/>
</dbReference>
<dbReference type="EMBL" id="AK155487">
    <property type="protein sequence ID" value="BAE33289.1"/>
    <property type="molecule type" value="mRNA"/>
</dbReference>
<dbReference type="EMBL" id="AK165963">
    <property type="protein sequence ID" value="BAE38490.1"/>
    <property type="molecule type" value="mRNA"/>
</dbReference>
<dbReference type="EMBL" id="AK169617">
    <property type="protein sequence ID" value="BAE41264.1"/>
    <property type="molecule type" value="mRNA"/>
</dbReference>
<dbReference type="EMBL" id="BC118527">
    <property type="protein sequence ID" value="AAI18528.1"/>
    <property type="molecule type" value="mRNA"/>
</dbReference>
<dbReference type="CCDS" id="CCDS23219.1">
    <molecule id="Q3TEI4-1"/>
</dbReference>
<dbReference type="RefSeq" id="NP_083096.1">
    <molecule id="Q3TEI4-1"/>
    <property type="nucleotide sequence ID" value="NM_028820.2"/>
</dbReference>
<dbReference type="RefSeq" id="XP_006511579.1">
    <molecule id="Q3TEI4-1"/>
    <property type="nucleotide sequence ID" value="XM_006511516.4"/>
</dbReference>
<dbReference type="FunCoup" id="Q3TEI4">
    <property type="interactions" value="410"/>
</dbReference>
<dbReference type="STRING" id="10090.ENSMUSP00000034846"/>
<dbReference type="GlyGen" id="Q3TEI4">
    <property type="glycosylation" value="4 sites, 1 O-linked glycan (1 site)"/>
</dbReference>
<dbReference type="iPTMnet" id="Q3TEI4"/>
<dbReference type="PhosphoSitePlus" id="Q3TEI4"/>
<dbReference type="PaxDb" id="10090-ENSMUSP00000034846"/>
<dbReference type="Antibodypedia" id="50503">
    <property type="antibodies" value="70 antibodies from 15 providers"/>
</dbReference>
<dbReference type="Ensembl" id="ENSMUST00000034846.7">
    <molecule id="Q3TEI4-1"/>
    <property type="protein sequence ID" value="ENSMUSP00000034846.6"/>
    <property type="gene ID" value="ENSMUSG00000032300.8"/>
</dbReference>
<dbReference type="Ensembl" id="ENSMUST00000215298.2">
    <molecule id="Q3TEI4-2"/>
    <property type="protein sequence ID" value="ENSMUSP00000150452.2"/>
    <property type="gene ID" value="ENSMUSG00000032300.8"/>
</dbReference>
<dbReference type="GeneID" id="74211"/>
<dbReference type="KEGG" id="mmu:74211"/>
<dbReference type="UCSC" id="uc009puq.2">
    <molecule id="Q3TEI4-1"/>
    <property type="organism name" value="mouse"/>
</dbReference>
<dbReference type="UCSC" id="uc009pur.2">
    <molecule id="Q3TEI4-2"/>
    <property type="organism name" value="mouse"/>
</dbReference>
<dbReference type="AGR" id="MGI:1921461"/>
<dbReference type="MGI" id="MGI:1921461">
    <property type="gene designation" value="1700017B05Rik"/>
</dbReference>
<dbReference type="VEuPathDB" id="HostDB:ENSMUSG00000032300"/>
<dbReference type="eggNOG" id="ENOG502QW16">
    <property type="taxonomic scope" value="Eukaryota"/>
</dbReference>
<dbReference type="GeneTree" id="ENSGT00390000002672"/>
<dbReference type="HOGENOM" id="CLU_322865_0_0_1"/>
<dbReference type="InParanoid" id="Q3TEI4"/>
<dbReference type="OMA" id="DTYSYPS"/>
<dbReference type="OrthoDB" id="9908305at2759"/>
<dbReference type="PhylomeDB" id="Q3TEI4"/>
<dbReference type="TreeFam" id="TF338672"/>
<dbReference type="BioGRID-ORCS" id="74211">
    <property type="hits" value="6 hits in 76 CRISPR screens"/>
</dbReference>
<dbReference type="PRO" id="PR:Q3TEI4"/>
<dbReference type="Proteomes" id="UP000000589">
    <property type="component" value="Chromosome 9"/>
</dbReference>
<dbReference type="RNAct" id="Q3TEI4">
    <property type="molecule type" value="protein"/>
</dbReference>
<dbReference type="Bgee" id="ENSMUSG00000032300">
    <property type="expression patterns" value="Expressed in spermatocyte and 217 other cell types or tissues"/>
</dbReference>
<dbReference type="ExpressionAtlas" id="Q3TEI4">
    <property type="expression patterns" value="baseline and differential"/>
</dbReference>
<dbReference type="GO" id="GO:0005829">
    <property type="term" value="C:cytosol"/>
    <property type="evidence" value="ECO:0007669"/>
    <property type="project" value="Ensembl"/>
</dbReference>
<dbReference type="InterPro" id="IPR037656">
    <property type="entry name" value="DUF5525"/>
</dbReference>
<dbReference type="PANTHER" id="PTHR28422">
    <property type="entry name" value="SIMILAR TO HUMAN CHROMOSOME 15 OPEN READING FRAME 39"/>
    <property type="match status" value="1"/>
</dbReference>
<dbReference type="PANTHER" id="PTHR28422:SF1">
    <property type="entry name" value="SIMILAR TO HUMAN CHROMOSOME 15 OPEN READING FRAME 39"/>
    <property type="match status" value="1"/>
</dbReference>
<dbReference type="Pfam" id="PF17663">
    <property type="entry name" value="DUF5525"/>
    <property type="match status" value="1"/>
</dbReference>
<proteinExistence type="evidence at protein level"/>
<comment type="alternative products">
    <event type="alternative splicing"/>
    <isoform>
        <id>Q3TEI4-1</id>
        <name>1</name>
        <sequence type="displayed"/>
    </isoform>
    <isoform>
        <id>Q3TEI4-2</id>
        <name>2</name>
        <sequence type="described" ref="VSP_019542"/>
    </isoform>
</comment>
<comment type="miscellaneous">
    <molecule>Isoform 2</molecule>
    <text evidence="4">May be due to competing donor splice site.</text>
</comment>
<reference key="1">
    <citation type="journal article" date="2005" name="Science">
        <title>The transcriptional landscape of the mammalian genome.</title>
        <authorList>
            <person name="Carninci P."/>
            <person name="Kasukawa T."/>
            <person name="Katayama S."/>
            <person name="Gough J."/>
            <person name="Frith M.C."/>
            <person name="Maeda N."/>
            <person name="Oyama R."/>
            <person name="Ravasi T."/>
            <person name="Lenhard B."/>
            <person name="Wells C."/>
            <person name="Kodzius R."/>
            <person name="Shimokawa K."/>
            <person name="Bajic V.B."/>
            <person name="Brenner S.E."/>
            <person name="Batalov S."/>
            <person name="Forrest A.R."/>
            <person name="Zavolan M."/>
            <person name="Davis M.J."/>
            <person name="Wilming L.G."/>
            <person name="Aidinis V."/>
            <person name="Allen J.E."/>
            <person name="Ambesi-Impiombato A."/>
            <person name="Apweiler R."/>
            <person name="Aturaliya R.N."/>
            <person name="Bailey T.L."/>
            <person name="Bansal M."/>
            <person name="Baxter L."/>
            <person name="Beisel K.W."/>
            <person name="Bersano T."/>
            <person name="Bono H."/>
            <person name="Chalk A.M."/>
            <person name="Chiu K.P."/>
            <person name="Choudhary V."/>
            <person name="Christoffels A."/>
            <person name="Clutterbuck D.R."/>
            <person name="Crowe M.L."/>
            <person name="Dalla E."/>
            <person name="Dalrymple B.P."/>
            <person name="de Bono B."/>
            <person name="Della Gatta G."/>
            <person name="di Bernardo D."/>
            <person name="Down T."/>
            <person name="Engstrom P."/>
            <person name="Fagiolini M."/>
            <person name="Faulkner G."/>
            <person name="Fletcher C.F."/>
            <person name="Fukushima T."/>
            <person name="Furuno M."/>
            <person name="Futaki S."/>
            <person name="Gariboldi M."/>
            <person name="Georgii-Hemming P."/>
            <person name="Gingeras T.R."/>
            <person name="Gojobori T."/>
            <person name="Green R.E."/>
            <person name="Gustincich S."/>
            <person name="Harbers M."/>
            <person name="Hayashi Y."/>
            <person name="Hensch T.K."/>
            <person name="Hirokawa N."/>
            <person name="Hill D."/>
            <person name="Huminiecki L."/>
            <person name="Iacono M."/>
            <person name="Ikeo K."/>
            <person name="Iwama A."/>
            <person name="Ishikawa T."/>
            <person name="Jakt M."/>
            <person name="Kanapin A."/>
            <person name="Katoh M."/>
            <person name="Kawasawa Y."/>
            <person name="Kelso J."/>
            <person name="Kitamura H."/>
            <person name="Kitano H."/>
            <person name="Kollias G."/>
            <person name="Krishnan S.P."/>
            <person name="Kruger A."/>
            <person name="Kummerfeld S.K."/>
            <person name="Kurochkin I.V."/>
            <person name="Lareau L.F."/>
            <person name="Lazarevic D."/>
            <person name="Lipovich L."/>
            <person name="Liu J."/>
            <person name="Liuni S."/>
            <person name="McWilliam S."/>
            <person name="Madan Babu M."/>
            <person name="Madera M."/>
            <person name="Marchionni L."/>
            <person name="Matsuda H."/>
            <person name="Matsuzawa S."/>
            <person name="Miki H."/>
            <person name="Mignone F."/>
            <person name="Miyake S."/>
            <person name="Morris K."/>
            <person name="Mottagui-Tabar S."/>
            <person name="Mulder N."/>
            <person name="Nakano N."/>
            <person name="Nakauchi H."/>
            <person name="Ng P."/>
            <person name="Nilsson R."/>
            <person name="Nishiguchi S."/>
            <person name="Nishikawa S."/>
            <person name="Nori F."/>
            <person name="Ohara O."/>
            <person name="Okazaki Y."/>
            <person name="Orlando V."/>
            <person name="Pang K.C."/>
            <person name="Pavan W.J."/>
            <person name="Pavesi G."/>
            <person name="Pesole G."/>
            <person name="Petrovsky N."/>
            <person name="Piazza S."/>
            <person name="Reed J."/>
            <person name="Reid J.F."/>
            <person name="Ring B.Z."/>
            <person name="Ringwald M."/>
            <person name="Rost B."/>
            <person name="Ruan Y."/>
            <person name="Salzberg S.L."/>
            <person name="Sandelin A."/>
            <person name="Schneider C."/>
            <person name="Schoenbach C."/>
            <person name="Sekiguchi K."/>
            <person name="Semple C.A."/>
            <person name="Seno S."/>
            <person name="Sessa L."/>
            <person name="Sheng Y."/>
            <person name="Shibata Y."/>
            <person name="Shimada H."/>
            <person name="Shimada K."/>
            <person name="Silva D."/>
            <person name="Sinclair B."/>
            <person name="Sperling S."/>
            <person name="Stupka E."/>
            <person name="Sugiura K."/>
            <person name="Sultana R."/>
            <person name="Takenaka Y."/>
            <person name="Taki K."/>
            <person name="Tammoja K."/>
            <person name="Tan S.L."/>
            <person name="Tang S."/>
            <person name="Taylor M.S."/>
            <person name="Tegner J."/>
            <person name="Teichmann S.A."/>
            <person name="Ueda H.R."/>
            <person name="van Nimwegen E."/>
            <person name="Verardo R."/>
            <person name="Wei C.L."/>
            <person name="Yagi K."/>
            <person name="Yamanishi H."/>
            <person name="Zabarovsky E."/>
            <person name="Zhu S."/>
            <person name="Zimmer A."/>
            <person name="Hide W."/>
            <person name="Bult C."/>
            <person name="Grimmond S.M."/>
            <person name="Teasdale R.D."/>
            <person name="Liu E.T."/>
            <person name="Brusic V."/>
            <person name="Quackenbush J."/>
            <person name="Wahlestedt C."/>
            <person name="Mattick J.S."/>
            <person name="Hume D.A."/>
            <person name="Kai C."/>
            <person name="Sasaki D."/>
            <person name="Tomaru Y."/>
            <person name="Fukuda S."/>
            <person name="Kanamori-Katayama M."/>
            <person name="Suzuki M."/>
            <person name="Aoki J."/>
            <person name="Arakawa T."/>
            <person name="Iida J."/>
            <person name="Imamura K."/>
            <person name="Itoh M."/>
            <person name="Kato T."/>
            <person name="Kawaji H."/>
            <person name="Kawagashira N."/>
            <person name="Kawashima T."/>
            <person name="Kojima M."/>
            <person name="Kondo S."/>
            <person name="Konno H."/>
            <person name="Nakano K."/>
            <person name="Ninomiya N."/>
            <person name="Nishio T."/>
            <person name="Okada M."/>
            <person name="Plessy C."/>
            <person name="Shibata K."/>
            <person name="Shiraki T."/>
            <person name="Suzuki S."/>
            <person name="Tagami M."/>
            <person name="Waki K."/>
            <person name="Watahiki A."/>
            <person name="Okamura-Oho Y."/>
            <person name="Suzuki H."/>
            <person name="Kawai J."/>
            <person name="Hayashizaki Y."/>
        </authorList>
    </citation>
    <scope>NUCLEOTIDE SEQUENCE [LARGE SCALE MRNA] (ISOFORMS 1 AND 2)</scope>
    <source>
        <strain>NOD</strain>
        <tissue>Dendritic cell</tissue>
        <tissue>Lung</tissue>
        <tissue>Mammary gland</tissue>
        <tissue>Testis</tissue>
        <tissue>Thymus</tissue>
    </source>
</reference>
<reference key="2">
    <citation type="journal article" date="2004" name="Genome Res.">
        <title>The status, quality, and expansion of the NIH full-length cDNA project: the Mammalian Gene Collection (MGC).</title>
        <authorList>
            <consortium name="The MGC Project Team"/>
        </authorList>
    </citation>
    <scope>NUCLEOTIDE SEQUENCE [LARGE SCALE MRNA] (ISOFORM 1)</scope>
</reference>
<reference key="3">
    <citation type="journal article" date="2009" name="Immunity">
        <title>The phagosomal proteome in interferon-gamma-activated macrophages.</title>
        <authorList>
            <person name="Trost M."/>
            <person name="English L."/>
            <person name="Lemieux S."/>
            <person name="Courcelles M."/>
            <person name="Desjardins M."/>
            <person name="Thibault P."/>
        </authorList>
    </citation>
    <scope>PHOSPHORYLATION [LARGE SCALE ANALYSIS] AT SER-912</scope>
    <scope>IDENTIFICATION BY MASS SPECTROMETRY [LARGE SCALE ANALYSIS]</scope>
</reference>
<reference key="4">
    <citation type="journal article" date="2010" name="Cell">
        <title>A tissue-specific atlas of mouse protein phosphorylation and expression.</title>
        <authorList>
            <person name="Huttlin E.L."/>
            <person name="Jedrychowski M.P."/>
            <person name="Elias J.E."/>
            <person name="Goswami T."/>
            <person name="Rad R."/>
            <person name="Beausoleil S.A."/>
            <person name="Villen J."/>
            <person name="Haas W."/>
            <person name="Sowa M.E."/>
            <person name="Gygi S.P."/>
        </authorList>
    </citation>
    <scope>PHOSPHORYLATION [LARGE SCALE ANALYSIS] AT SER-493; SER-494; SER-964 AND SER-972</scope>
    <scope>IDENTIFICATION BY MASS SPECTROMETRY [LARGE SCALE ANALYSIS]</scope>
    <source>
        <tissue>Spleen</tissue>
        <tissue>Testis</tissue>
    </source>
</reference>
<sequence>MAEKRPLGPLGPMMYGKLPRLEPDPGPGHSLPLSASSQDSCNYKGAYFSCPIGGTSKAGSERLASWTPYPSLYPTGVAGSPLRGDNLLTNCLLYRPPTEGSEKIQDSSELLPFGPQAHAYPGPPLAAPKPVYRNPLCYGLSTCLGDGGTKRSLDGDWTLVTGPLLPSADPPCPLATAPGKGQPLDGTFLRGLPSGGPGKDSSLPFSPCQAFLEKYRTIQSTGFLASKYTSPYPGDAKQAMSEGPSSPWTQLAQPLGPPCQDAVAAHYPLPPPPQALPCPPSCHPEKQGSYGSLLPLPPLGAHKGAAYQAGGLGSPYLRQQAPQAPYMPPLGIDSYSYSSAPLPAPSPGLKLEPPLAPRCPLDFVPQTLGFPYARDDLSLYGASPGLGGTPPSHSQNSVQPVPQPGAFQRACQPLPASQPCSEPVRPAEKPTPEAQEKMWLPSCRKEQLQPRPNERPGVPIVIRDSPVPRTSPALHPCAKERQSVPQKDARPPSSPPMPVIDNVFSLAPYRDYLDVQTPEPRAERDSAPATSKSQDKDCKGNLPAQDGASRSHCSLREEVALDLSVKKTMAEGVPVKVPSPEVHEKPAEAVDGPGIENTVSGLPGLKKMVTEIPEVTAEATPRTNFHSSVAFMFRKFKILRTAPVPAAIVSSPTTPAPVPAPAPAQPVPNPPSVPVGLQILTQPLPVACFNLALPSPPAIVASPAPASAPPPSPAPAPAPASGPAPSSAQVPTAAPVDSPEQHFTGLHTSLCDAISGSVAHSPPEKLREWLETTGPWGQAAWQDCQGVQGLLGKLLSQLQKFVCTQRCPFPHVVRAGAIFVPIHLVKERLFPKLPPASVDHVLQDHRVELRPTTLSEERALRERALHGCTSRMLKLLALRQLPDIYPDLLGLQWHDCVRRQLGGFDTEARTLSPSEPTVTRDEPESQALAGKLPAPKVKKPGRKPPTPGPEKAEAATGEGSRNPSPSSGASTSPPGPTLRARFRNLLENAWLNGVALPTWGHKASGADRSSPHPQLLGSQTHHL</sequence>